<accession>B2U882</accession>
<dbReference type="EC" id="2.6.1.52" evidence="1"/>
<dbReference type="EMBL" id="CP001068">
    <property type="protein sequence ID" value="ACD25924.1"/>
    <property type="molecule type" value="Genomic_DNA"/>
</dbReference>
<dbReference type="SMR" id="B2U882"/>
<dbReference type="STRING" id="402626.Rpic_0773"/>
<dbReference type="KEGG" id="rpi:Rpic_0773"/>
<dbReference type="PATRIC" id="fig|402626.5.peg.1969"/>
<dbReference type="eggNOG" id="COG1932">
    <property type="taxonomic scope" value="Bacteria"/>
</dbReference>
<dbReference type="HOGENOM" id="CLU_034866_0_2_4"/>
<dbReference type="UniPathway" id="UPA00135">
    <property type="reaction ID" value="UER00197"/>
</dbReference>
<dbReference type="UniPathway" id="UPA00244">
    <property type="reaction ID" value="UER00311"/>
</dbReference>
<dbReference type="GO" id="GO:0005737">
    <property type="term" value="C:cytoplasm"/>
    <property type="evidence" value="ECO:0007669"/>
    <property type="project" value="UniProtKB-SubCell"/>
</dbReference>
<dbReference type="GO" id="GO:0004648">
    <property type="term" value="F:O-phospho-L-serine:2-oxoglutarate aminotransferase activity"/>
    <property type="evidence" value="ECO:0007669"/>
    <property type="project" value="UniProtKB-UniRule"/>
</dbReference>
<dbReference type="GO" id="GO:0030170">
    <property type="term" value="F:pyridoxal phosphate binding"/>
    <property type="evidence" value="ECO:0007669"/>
    <property type="project" value="UniProtKB-UniRule"/>
</dbReference>
<dbReference type="GO" id="GO:0006564">
    <property type="term" value="P:L-serine biosynthetic process"/>
    <property type="evidence" value="ECO:0007669"/>
    <property type="project" value="UniProtKB-UniRule"/>
</dbReference>
<dbReference type="GO" id="GO:0008615">
    <property type="term" value="P:pyridoxine biosynthetic process"/>
    <property type="evidence" value="ECO:0007669"/>
    <property type="project" value="UniProtKB-UniRule"/>
</dbReference>
<dbReference type="FunFam" id="3.40.640.10:FF:000010">
    <property type="entry name" value="Phosphoserine aminotransferase"/>
    <property type="match status" value="1"/>
</dbReference>
<dbReference type="FunFam" id="3.90.1150.10:FF:000006">
    <property type="entry name" value="Phosphoserine aminotransferase"/>
    <property type="match status" value="1"/>
</dbReference>
<dbReference type="Gene3D" id="3.90.1150.10">
    <property type="entry name" value="Aspartate Aminotransferase, domain 1"/>
    <property type="match status" value="1"/>
</dbReference>
<dbReference type="Gene3D" id="3.40.640.10">
    <property type="entry name" value="Type I PLP-dependent aspartate aminotransferase-like (Major domain)"/>
    <property type="match status" value="1"/>
</dbReference>
<dbReference type="HAMAP" id="MF_00160">
    <property type="entry name" value="SerC_aminotrans_5"/>
    <property type="match status" value="1"/>
</dbReference>
<dbReference type="InterPro" id="IPR000192">
    <property type="entry name" value="Aminotrans_V_dom"/>
</dbReference>
<dbReference type="InterPro" id="IPR022278">
    <property type="entry name" value="Pser_aminoTfrase"/>
</dbReference>
<dbReference type="InterPro" id="IPR015424">
    <property type="entry name" value="PyrdxlP-dep_Trfase"/>
</dbReference>
<dbReference type="InterPro" id="IPR015421">
    <property type="entry name" value="PyrdxlP-dep_Trfase_major"/>
</dbReference>
<dbReference type="InterPro" id="IPR015422">
    <property type="entry name" value="PyrdxlP-dep_Trfase_small"/>
</dbReference>
<dbReference type="NCBIfam" id="NF003764">
    <property type="entry name" value="PRK05355.1"/>
    <property type="match status" value="1"/>
</dbReference>
<dbReference type="NCBIfam" id="TIGR01364">
    <property type="entry name" value="serC_1"/>
    <property type="match status" value="1"/>
</dbReference>
<dbReference type="PANTHER" id="PTHR43247">
    <property type="entry name" value="PHOSPHOSERINE AMINOTRANSFERASE"/>
    <property type="match status" value="1"/>
</dbReference>
<dbReference type="PANTHER" id="PTHR43247:SF1">
    <property type="entry name" value="PHOSPHOSERINE AMINOTRANSFERASE"/>
    <property type="match status" value="1"/>
</dbReference>
<dbReference type="Pfam" id="PF00266">
    <property type="entry name" value="Aminotran_5"/>
    <property type="match status" value="1"/>
</dbReference>
<dbReference type="PIRSF" id="PIRSF000525">
    <property type="entry name" value="SerC"/>
    <property type="match status" value="1"/>
</dbReference>
<dbReference type="SUPFAM" id="SSF53383">
    <property type="entry name" value="PLP-dependent transferases"/>
    <property type="match status" value="1"/>
</dbReference>
<protein>
    <recommendedName>
        <fullName evidence="1">Phosphoserine aminotransferase</fullName>
        <ecNumber evidence="1">2.6.1.52</ecNumber>
    </recommendedName>
    <alternativeName>
        <fullName evidence="1">Phosphohydroxythreonine aminotransferase</fullName>
        <shortName evidence="1">PSAT</shortName>
    </alternativeName>
</protein>
<organism>
    <name type="scientific">Ralstonia pickettii (strain 12J)</name>
    <dbReference type="NCBI Taxonomy" id="402626"/>
    <lineage>
        <taxon>Bacteria</taxon>
        <taxon>Pseudomonadati</taxon>
        <taxon>Pseudomonadota</taxon>
        <taxon>Betaproteobacteria</taxon>
        <taxon>Burkholderiales</taxon>
        <taxon>Burkholderiaceae</taxon>
        <taxon>Ralstonia</taxon>
    </lineage>
</organism>
<name>SERC_RALPJ</name>
<gene>
    <name evidence="1" type="primary">serC</name>
    <name type="ordered locus">Rpic_0773</name>
</gene>
<comment type="function">
    <text evidence="1">Catalyzes the reversible conversion of 3-phosphohydroxypyruvate to phosphoserine and of 3-hydroxy-2-oxo-4-phosphonooxybutanoate to phosphohydroxythreonine.</text>
</comment>
<comment type="catalytic activity">
    <reaction evidence="1">
        <text>O-phospho-L-serine + 2-oxoglutarate = 3-phosphooxypyruvate + L-glutamate</text>
        <dbReference type="Rhea" id="RHEA:14329"/>
        <dbReference type="ChEBI" id="CHEBI:16810"/>
        <dbReference type="ChEBI" id="CHEBI:18110"/>
        <dbReference type="ChEBI" id="CHEBI:29985"/>
        <dbReference type="ChEBI" id="CHEBI:57524"/>
        <dbReference type="EC" id="2.6.1.52"/>
    </reaction>
</comment>
<comment type="catalytic activity">
    <reaction evidence="1">
        <text>4-(phosphooxy)-L-threonine + 2-oxoglutarate = (R)-3-hydroxy-2-oxo-4-phosphooxybutanoate + L-glutamate</text>
        <dbReference type="Rhea" id="RHEA:16573"/>
        <dbReference type="ChEBI" id="CHEBI:16810"/>
        <dbReference type="ChEBI" id="CHEBI:29985"/>
        <dbReference type="ChEBI" id="CHEBI:58452"/>
        <dbReference type="ChEBI" id="CHEBI:58538"/>
        <dbReference type="EC" id="2.6.1.52"/>
    </reaction>
</comment>
<comment type="cofactor">
    <cofactor evidence="1">
        <name>pyridoxal 5'-phosphate</name>
        <dbReference type="ChEBI" id="CHEBI:597326"/>
    </cofactor>
    <text evidence="1">Binds 1 pyridoxal phosphate per subunit.</text>
</comment>
<comment type="pathway">
    <text evidence="1">Amino-acid biosynthesis; L-serine biosynthesis; L-serine from 3-phospho-D-glycerate: step 2/3.</text>
</comment>
<comment type="pathway">
    <text evidence="1">Cofactor biosynthesis; pyridoxine 5'-phosphate biosynthesis; pyridoxine 5'-phosphate from D-erythrose 4-phosphate: step 3/5.</text>
</comment>
<comment type="subunit">
    <text evidence="1">Homodimer.</text>
</comment>
<comment type="subcellular location">
    <subcellularLocation>
        <location evidence="1">Cytoplasm</location>
    </subcellularLocation>
</comment>
<comment type="similarity">
    <text evidence="1">Belongs to the class-V pyridoxal-phosphate-dependent aminotransferase family. SerC subfamily.</text>
</comment>
<reference key="1">
    <citation type="submission" date="2008-05" db="EMBL/GenBank/DDBJ databases">
        <title>Complete sequence of chromosome 1 of Ralstonia pickettii 12J.</title>
        <authorList>
            <person name="Lucas S."/>
            <person name="Copeland A."/>
            <person name="Lapidus A."/>
            <person name="Glavina del Rio T."/>
            <person name="Dalin E."/>
            <person name="Tice H."/>
            <person name="Bruce D."/>
            <person name="Goodwin L."/>
            <person name="Pitluck S."/>
            <person name="Meincke L."/>
            <person name="Brettin T."/>
            <person name="Detter J.C."/>
            <person name="Han C."/>
            <person name="Kuske C.R."/>
            <person name="Schmutz J."/>
            <person name="Larimer F."/>
            <person name="Land M."/>
            <person name="Hauser L."/>
            <person name="Kyrpides N."/>
            <person name="Mikhailova N."/>
            <person name="Marsh T."/>
            <person name="Richardson P."/>
        </authorList>
    </citation>
    <scope>NUCLEOTIDE SEQUENCE [LARGE SCALE GENOMIC DNA]</scope>
    <source>
        <strain>12J</strain>
    </source>
</reference>
<sequence>MNQADRALQASQARVYNFSAGPAVLPLEVLEQAKEEMVSWHGSGMSVMEMSHRGREFENILAAAFSDLRQLLAVPDNYEILFLQGGAIAENAIVPLNLMRRLSADAPKADYVVTGTWSVKSQQEARKYGEVNIAATSETERFHKIPDVSSWKLSSDAAYVHLCTNETIVGVEYQETPDVGQAHGRVVVSDVSSHILSRPIDWNGYQVLYGGAQKNIGPAGLTIAIVRKDLLGHAHPLCPSAFNWRLVAENGSMYNTPPTYAIYIAGLVFQWIKRQGGVEALETRNIIKSKMLYDFIDASSFYRNEIHPTCRSRMNVPFFLNDESRSEAFLAQARERGLVQLKGHKSVGGMRASIYNAMPLEGVEALVDFMREFERVSA</sequence>
<keyword id="KW-0028">Amino-acid biosynthesis</keyword>
<keyword id="KW-0032">Aminotransferase</keyword>
<keyword id="KW-0963">Cytoplasm</keyword>
<keyword id="KW-0663">Pyridoxal phosphate</keyword>
<keyword id="KW-0664">Pyridoxine biosynthesis</keyword>
<keyword id="KW-0718">Serine biosynthesis</keyword>
<keyword id="KW-0808">Transferase</keyword>
<proteinExistence type="inferred from homology"/>
<evidence type="ECO:0000255" key="1">
    <source>
        <dbReference type="HAMAP-Rule" id="MF_00160"/>
    </source>
</evidence>
<feature type="chain" id="PRO_1000097220" description="Phosphoserine aminotransferase">
    <location>
        <begin position="1"/>
        <end position="378"/>
    </location>
</feature>
<feature type="binding site" evidence="1">
    <location>
        <position position="53"/>
    </location>
    <ligand>
        <name>L-glutamate</name>
        <dbReference type="ChEBI" id="CHEBI:29985"/>
    </ligand>
</feature>
<feature type="binding site" evidence="1">
    <location>
        <position position="117"/>
    </location>
    <ligand>
        <name>pyridoxal 5'-phosphate</name>
        <dbReference type="ChEBI" id="CHEBI:597326"/>
    </ligand>
</feature>
<feature type="binding site" evidence="1">
    <location>
        <position position="167"/>
    </location>
    <ligand>
        <name>pyridoxal 5'-phosphate</name>
        <dbReference type="ChEBI" id="CHEBI:597326"/>
    </ligand>
</feature>
<feature type="binding site" evidence="1">
    <location>
        <position position="190"/>
    </location>
    <ligand>
        <name>pyridoxal 5'-phosphate</name>
        <dbReference type="ChEBI" id="CHEBI:597326"/>
    </ligand>
</feature>
<feature type="binding site" evidence="1">
    <location>
        <position position="213"/>
    </location>
    <ligand>
        <name>pyridoxal 5'-phosphate</name>
        <dbReference type="ChEBI" id="CHEBI:597326"/>
    </ligand>
</feature>
<feature type="binding site" evidence="1">
    <location>
        <begin position="255"/>
        <end position="256"/>
    </location>
    <ligand>
        <name>pyridoxal 5'-phosphate</name>
        <dbReference type="ChEBI" id="CHEBI:597326"/>
    </ligand>
</feature>
<feature type="modified residue" description="N6-(pyridoxal phosphate)lysine" evidence="1">
    <location>
        <position position="214"/>
    </location>
</feature>